<gene>
    <name type="ORF">NCU02305</name>
</gene>
<comment type="function">
    <text evidence="1">Assembly of polyisoprenoid side chains. The polyprenyl synthase of coenzyme Q biosynthesis catalyzes the formation from isopentenyl diphosphate of all trans-polyprenyl pyrophosphates generally ranging in length of between 6 and 10 isoprene units depending on the species (By similarity).</text>
</comment>
<comment type="cofactor">
    <cofactor evidence="1">
        <name>Mg(2+)</name>
        <dbReference type="ChEBI" id="CHEBI:18420"/>
    </cofactor>
    <text evidence="1">Binds 2 Mg(2+) ions per subunit.</text>
</comment>
<comment type="pathway">
    <text>Cofactor biosynthesis; ubiquinone biosynthesis.</text>
</comment>
<comment type="subcellular location">
    <subcellularLocation>
        <location evidence="1">Mitochondrion</location>
    </subcellularLocation>
</comment>
<comment type="similarity">
    <text evidence="5">Belongs to the FPP/GGPP synthase family.</text>
</comment>
<protein>
    <recommendedName>
        <fullName>Probable hexaprenyl pyrophosphate synthase, mitochondrial</fullName>
        <shortName>HPS</shortName>
        <ecNumber>2.5.1.-</ecNumber>
    </recommendedName>
</protein>
<feature type="transit peptide" description="Mitochondrion" evidence="4">
    <location>
        <begin position="1"/>
        <end status="unknown"/>
    </location>
</feature>
<feature type="chain" id="PRO_0000016475" description="Probable hexaprenyl pyrophosphate synthase, mitochondrial">
    <location>
        <begin status="unknown"/>
        <end position="449"/>
    </location>
</feature>
<feature type="binding site" evidence="2">
    <location>
        <position position="122"/>
    </location>
    <ligand>
        <name>isopentenyl diphosphate</name>
        <dbReference type="ChEBI" id="CHEBI:128769"/>
    </ligand>
</feature>
<feature type="binding site" evidence="2">
    <location>
        <position position="125"/>
    </location>
    <ligand>
        <name>isopentenyl diphosphate</name>
        <dbReference type="ChEBI" id="CHEBI:128769"/>
    </ligand>
</feature>
<feature type="binding site" evidence="3">
    <location>
        <position position="200"/>
    </location>
    <ligand>
        <name>isopentenyl diphosphate</name>
        <dbReference type="ChEBI" id="CHEBI:128769"/>
    </ligand>
</feature>
<feature type="binding site" evidence="2">
    <location>
        <position position="207"/>
    </location>
    <ligand>
        <name>Mg(2+)</name>
        <dbReference type="ChEBI" id="CHEBI:18420"/>
        <label>1</label>
    </ligand>
</feature>
<feature type="binding site" evidence="2">
    <location>
        <position position="207"/>
    </location>
    <ligand>
        <name>Mg(2+)</name>
        <dbReference type="ChEBI" id="CHEBI:18420"/>
        <label>2</label>
    </ligand>
</feature>
<feature type="binding site" evidence="2">
    <location>
        <position position="211"/>
    </location>
    <ligand>
        <name>Mg(2+)</name>
        <dbReference type="ChEBI" id="CHEBI:18420"/>
        <label>1</label>
    </ligand>
</feature>
<feature type="binding site" evidence="2">
    <location>
        <position position="211"/>
    </location>
    <ligand>
        <name>Mg(2+)</name>
        <dbReference type="ChEBI" id="CHEBI:18420"/>
        <label>2</label>
    </ligand>
</feature>
<feature type="binding site" evidence="1">
    <location>
        <position position="216"/>
    </location>
    <ligand>
        <name>an all-trans-polyprenyl diphosphate</name>
        <dbReference type="ChEBI" id="CHEBI:58914"/>
    </ligand>
</feature>
<feature type="binding site" evidence="2">
    <location>
        <position position="217"/>
    </location>
    <ligand>
        <name>isopentenyl diphosphate</name>
        <dbReference type="ChEBI" id="CHEBI:128769"/>
    </ligand>
</feature>
<feature type="binding site" evidence="1">
    <location>
        <position position="300"/>
    </location>
    <ligand>
        <name>an all-trans-polyprenyl diphosphate</name>
        <dbReference type="ChEBI" id="CHEBI:58914"/>
    </ligand>
</feature>
<feature type="binding site" evidence="1">
    <location>
        <position position="301"/>
    </location>
    <ligand>
        <name>an all-trans-polyprenyl diphosphate</name>
        <dbReference type="ChEBI" id="CHEBI:58914"/>
    </ligand>
</feature>
<feature type="binding site" evidence="1">
    <location>
        <position position="338"/>
    </location>
    <ligand>
        <name>an all-trans-polyprenyl diphosphate</name>
        <dbReference type="ChEBI" id="CHEBI:58914"/>
    </ligand>
</feature>
<feature type="binding site" evidence="1">
    <location>
        <position position="355"/>
    </location>
    <ligand>
        <name>an all-trans-polyprenyl diphosphate</name>
        <dbReference type="ChEBI" id="CHEBI:58914"/>
    </ligand>
</feature>
<dbReference type="EC" id="2.5.1.-"/>
<dbReference type="EMBL" id="CM002242">
    <property type="protein sequence ID" value="EAA30713.1"/>
    <property type="molecule type" value="Genomic_DNA"/>
</dbReference>
<dbReference type="RefSeq" id="XP_959949.1">
    <property type="nucleotide sequence ID" value="XM_954856.2"/>
</dbReference>
<dbReference type="SMR" id="Q7S565"/>
<dbReference type="FunCoup" id="Q7S565">
    <property type="interactions" value="522"/>
</dbReference>
<dbReference type="STRING" id="367110.Q7S565"/>
<dbReference type="PaxDb" id="5141-EFNCRP00000003125"/>
<dbReference type="EnsemblFungi" id="EAA30713">
    <property type="protein sequence ID" value="EAA30713"/>
    <property type="gene ID" value="NCU02305"/>
</dbReference>
<dbReference type="GeneID" id="3876064"/>
<dbReference type="KEGG" id="ncr:NCU02305"/>
<dbReference type="VEuPathDB" id="FungiDB:NCU02305"/>
<dbReference type="HOGENOM" id="CLU_014015_1_0_1"/>
<dbReference type="InParanoid" id="Q7S565"/>
<dbReference type="OMA" id="AFDYYLH"/>
<dbReference type="OrthoDB" id="9927103at2759"/>
<dbReference type="UniPathway" id="UPA00232"/>
<dbReference type="Proteomes" id="UP000001805">
    <property type="component" value="Chromosome 7, Linkage Group VII"/>
</dbReference>
<dbReference type="GO" id="GO:0005739">
    <property type="term" value="C:mitochondrion"/>
    <property type="evidence" value="ECO:0000318"/>
    <property type="project" value="GO_Central"/>
</dbReference>
<dbReference type="GO" id="GO:0032476">
    <property type="term" value="C:polyprenyl diphosphate synthase complex"/>
    <property type="evidence" value="ECO:0000318"/>
    <property type="project" value="GO_Central"/>
</dbReference>
<dbReference type="GO" id="GO:0046872">
    <property type="term" value="F:metal ion binding"/>
    <property type="evidence" value="ECO:0007669"/>
    <property type="project" value="UniProtKB-KW"/>
</dbReference>
<dbReference type="GO" id="GO:0004659">
    <property type="term" value="F:prenyltransferase activity"/>
    <property type="evidence" value="ECO:0000318"/>
    <property type="project" value="GO_Central"/>
</dbReference>
<dbReference type="GO" id="GO:0046165">
    <property type="term" value="P:alcohol biosynthetic process"/>
    <property type="evidence" value="ECO:0007669"/>
    <property type="project" value="UniProtKB-ARBA"/>
</dbReference>
<dbReference type="GO" id="GO:0008299">
    <property type="term" value="P:isoprenoid biosynthetic process"/>
    <property type="evidence" value="ECO:0000318"/>
    <property type="project" value="GO_Central"/>
</dbReference>
<dbReference type="GO" id="GO:0043386">
    <property type="term" value="P:mycotoxin biosynthetic process"/>
    <property type="evidence" value="ECO:0007669"/>
    <property type="project" value="UniProtKB-ARBA"/>
</dbReference>
<dbReference type="GO" id="GO:0006744">
    <property type="term" value="P:ubiquinone biosynthetic process"/>
    <property type="evidence" value="ECO:0000318"/>
    <property type="project" value="GO_Central"/>
</dbReference>
<dbReference type="CDD" id="cd00685">
    <property type="entry name" value="Trans_IPPS_HT"/>
    <property type="match status" value="1"/>
</dbReference>
<dbReference type="Gene3D" id="1.10.600.10">
    <property type="entry name" value="Farnesyl Diphosphate Synthase"/>
    <property type="match status" value="1"/>
</dbReference>
<dbReference type="InterPro" id="IPR008949">
    <property type="entry name" value="Isoprenoid_synthase_dom_sf"/>
</dbReference>
<dbReference type="InterPro" id="IPR000092">
    <property type="entry name" value="Polyprenyl_synt"/>
</dbReference>
<dbReference type="InterPro" id="IPR033749">
    <property type="entry name" value="Polyprenyl_synt_CS"/>
</dbReference>
<dbReference type="PANTHER" id="PTHR12001:SF69">
    <property type="entry name" value="ALL TRANS-POLYPRENYL-DIPHOSPHATE SYNTHASE PDSS1"/>
    <property type="match status" value="1"/>
</dbReference>
<dbReference type="PANTHER" id="PTHR12001">
    <property type="entry name" value="GERANYLGERANYL PYROPHOSPHATE SYNTHASE"/>
    <property type="match status" value="1"/>
</dbReference>
<dbReference type="Pfam" id="PF00348">
    <property type="entry name" value="polyprenyl_synt"/>
    <property type="match status" value="1"/>
</dbReference>
<dbReference type="SFLD" id="SFLDS00005">
    <property type="entry name" value="Isoprenoid_Synthase_Type_I"/>
    <property type="match status" value="1"/>
</dbReference>
<dbReference type="SUPFAM" id="SSF48576">
    <property type="entry name" value="Terpenoid synthases"/>
    <property type="match status" value="1"/>
</dbReference>
<dbReference type="PROSITE" id="PS00723">
    <property type="entry name" value="POLYPRENYL_SYNTHASE_1"/>
    <property type="match status" value="1"/>
</dbReference>
<dbReference type="PROSITE" id="PS00444">
    <property type="entry name" value="POLYPRENYL_SYNTHASE_2"/>
    <property type="match status" value="1"/>
</dbReference>
<reference key="1">
    <citation type="journal article" date="2003" name="Nature">
        <title>The genome sequence of the filamentous fungus Neurospora crassa.</title>
        <authorList>
            <person name="Galagan J.E."/>
            <person name="Calvo S.E."/>
            <person name="Borkovich K.A."/>
            <person name="Selker E.U."/>
            <person name="Read N.D."/>
            <person name="Jaffe D.B."/>
            <person name="FitzHugh W."/>
            <person name="Ma L.-J."/>
            <person name="Smirnov S."/>
            <person name="Purcell S."/>
            <person name="Rehman B."/>
            <person name="Elkins T."/>
            <person name="Engels R."/>
            <person name="Wang S."/>
            <person name="Nielsen C.B."/>
            <person name="Butler J."/>
            <person name="Endrizzi M."/>
            <person name="Qui D."/>
            <person name="Ianakiev P."/>
            <person name="Bell-Pedersen D."/>
            <person name="Nelson M.A."/>
            <person name="Werner-Washburne M."/>
            <person name="Selitrennikoff C.P."/>
            <person name="Kinsey J.A."/>
            <person name="Braun E.L."/>
            <person name="Zelter A."/>
            <person name="Schulte U."/>
            <person name="Kothe G.O."/>
            <person name="Jedd G."/>
            <person name="Mewes H.-W."/>
            <person name="Staben C."/>
            <person name="Marcotte E."/>
            <person name="Greenberg D."/>
            <person name="Roy A."/>
            <person name="Foley K."/>
            <person name="Naylor J."/>
            <person name="Stange-Thomann N."/>
            <person name="Barrett R."/>
            <person name="Gnerre S."/>
            <person name="Kamal M."/>
            <person name="Kamvysselis M."/>
            <person name="Mauceli E.W."/>
            <person name="Bielke C."/>
            <person name="Rudd S."/>
            <person name="Frishman D."/>
            <person name="Krystofova S."/>
            <person name="Rasmussen C."/>
            <person name="Metzenberg R.L."/>
            <person name="Perkins D.D."/>
            <person name="Kroken S."/>
            <person name="Cogoni C."/>
            <person name="Macino G."/>
            <person name="Catcheside D.E.A."/>
            <person name="Li W."/>
            <person name="Pratt R.J."/>
            <person name="Osmani S.A."/>
            <person name="DeSouza C.P.C."/>
            <person name="Glass N.L."/>
            <person name="Orbach M.J."/>
            <person name="Berglund J.A."/>
            <person name="Voelker R."/>
            <person name="Yarden O."/>
            <person name="Plamann M."/>
            <person name="Seiler S."/>
            <person name="Dunlap J.C."/>
            <person name="Radford A."/>
            <person name="Aramayo R."/>
            <person name="Natvig D.O."/>
            <person name="Alex L.A."/>
            <person name="Mannhaupt G."/>
            <person name="Ebbole D.J."/>
            <person name="Freitag M."/>
            <person name="Paulsen I."/>
            <person name="Sachs M.S."/>
            <person name="Lander E.S."/>
            <person name="Nusbaum C."/>
            <person name="Birren B.W."/>
        </authorList>
    </citation>
    <scope>NUCLEOTIDE SEQUENCE [LARGE SCALE GENOMIC DNA]</scope>
    <source>
        <strain>ATCC 24698 / 74-OR23-1A / CBS 708.71 / DSM 1257 / FGSC 987</strain>
    </source>
</reference>
<proteinExistence type="inferred from homology"/>
<organism>
    <name type="scientific">Neurospora crassa (strain ATCC 24698 / 74-OR23-1A / CBS 708.71 / DSM 1257 / FGSC 987)</name>
    <dbReference type="NCBI Taxonomy" id="367110"/>
    <lineage>
        <taxon>Eukaryota</taxon>
        <taxon>Fungi</taxon>
        <taxon>Dikarya</taxon>
        <taxon>Ascomycota</taxon>
        <taxon>Pezizomycotina</taxon>
        <taxon>Sordariomycetes</taxon>
        <taxon>Sordariomycetidae</taxon>
        <taxon>Sordariales</taxon>
        <taxon>Sordariaceae</taxon>
        <taxon>Neurospora</taxon>
    </lineage>
</organism>
<accession>Q7S565</accession>
<evidence type="ECO:0000250" key="1"/>
<evidence type="ECO:0000250" key="2">
    <source>
        <dbReference type="UniProtKB" id="P14324"/>
    </source>
</evidence>
<evidence type="ECO:0000250" key="3">
    <source>
        <dbReference type="UniProtKB" id="Q12051"/>
    </source>
</evidence>
<evidence type="ECO:0000255" key="4"/>
<evidence type="ECO:0000305" key="5"/>
<name>COQ1_NEUCR</name>
<keyword id="KW-0414">Isoprene biosynthesis</keyword>
<keyword id="KW-0460">Magnesium</keyword>
<keyword id="KW-0479">Metal-binding</keyword>
<keyword id="KW-0496">Mitochondrion</keyword>
<keyword id="KW-1185">Reference proteome</keyword>
<keyword id="KW-0808">Transferase</keyword>
<keyword id="KW-0809">Transit peptide</keyword>
<sequence>MQLRTGAASVVRTGLGLTQSRCAVQSLTAVPLERRIRQSKAFYHNTKKNDSAWAAAVSVAGNIVNNAVTKAIKGTDGLPTIDPLRLVAGEMKFLTGNIRKLLGSGHPSLDRAAKYYTQAEGKHVRPLIVLLMSRATALCPKAPQRQQSTLQASAAIDTSISPLNILSDFNPSDATPVSIPADTDILPSQRRLAEITELIHTASLLHDDVIDHSESRRGAPSANLEFGNKMAVLAGDFLLGRASVALARLRHAEVVELLATVIANLVEGEFMQLKNTARDEKNPKWSEETLTYYLQKTYLKTASLISKSCRASALLGGADAATVDAAYLYGKNLGLAFQLVDDMLDYTRSEKELGKPAGADLELGLATAPLLFAWKTMPELGPLVGRKFEKEGDAARARELVLQSNGIEQTRALAQDYAEKAIEAISGFPDSEAKDGLIEMAVKTLKRNK</sequence>